<name>RM02_CANGA</name>
<dbReference type="EMBL" id="CR380954">
    <property type="protein sequence ID" value="CAG59896.1"/>
    <property type="molecule type" value="Genomic_DNA"/>
</dbReference>
<dbReference type="RefSeq" id="XP_446963.1">
    <property type="nucleotide sequence ID" value="XM_446963.1"/>
</dbReference>
<dbReference type="SMR" id="Q6FS31"/>
<dbReference type="FunCoup" id="Q6FS31">
    <property type="interactions" value="324"/>
</dbReference>
<dbReference type="STRING" id="284593.Q6FS31"/>
<dbReference type="EnsemblFungi" id="CAGL0H03883g-T">
    <property type="protein sequence ID" value="CAGL0H03883g-T-p1"/>
    <property type="gene ID" value="CAGL0H03883g"/>
</dbReference>
<dbReference type="KEGG" id="cgr:2888661"/>
<dbReference type="CGD" id="CAL0130078">
    <property type="gene designation" value="CAGL0H03883g"/>
</dbReference>
<dbReference type="VEuPathDB" id="FungiDB:CAGL0H03883g"/>
<dbReference type="eggNOG" id="KOG4600">
    <property type="taxonomic scope" value="Eukaryota"/>
</dbReference>
<dbReference type="HOGENOM" id="CLU_063752_0_0_1"/>
<dbReference type="InParanoid" id="Q6FS31"/>
<dbReference type="OMA" id="YLDPFHP"/>
<dbReference type="Proteomes" id="UP000002428">
    <property type="component" value="Chromosome H"/>
</dbReference>
<dbReference type="GO" id="GO:0005762">
    <property type="term" value="C:mitochondrial large ribosomal subunit"/>
    <property type="evidence" value="ECO:0007669"/>
    <property type="project" value="EnsemblFungi"/>
</dbReference>
<dbReference type="GO" id="GO:0003735">
    <property type="term" value="F:structural constituent of ribosome"/>
    <property type="evidence" value="ECO:0007669"/>
    <property type="project" value="EnsemblFungi"/>
</dbReference>
<dbReference type="GO" id="GO:0033617">
    <property type="term" value="P:mitochondrial cytochrome c oxidase assembly"/>
    <property type="evidence" value="ECO:0007669"/>
    <property type="project" value="EnsemblFungi"/>
</dbReference>
<dbReference type="GO" id="GO:0006412">
    <property type="term" value="P:translation"/>
    <property type="evidence" value="ECO:0007669"/>
    <property type="project" value="InterPro"/>
</dbReference>
<dbReference type="FunFam" id="2.40.50.100:FF:000042">
    <property type="entry name" value="50S ribosomal protein L27"/>
    <property type="match status" value="1"/>
</dbReference>
<dbReference type="Gene3D" id="2.40.50.100">
    <property type="match status" value="1"/>
</dbReference>
<dbReference type="InterPro" id="IPR001684">
    <property type="entry name" value="Ribosomal_bL27"/>
</dbReference>
<dbReference type="InterPro" id="IPR018261">
    <property type="entry name" value="Ribosomal_bL27_CS"/>
</dbReference>
<dbReference type="InterPro" id="IPR041244">
    <property type="entry name" value="Ribosomal_bL27m_C"/>
</dbReference>
<dbReference type="NCBIfam" id="TIGR00062">
    <property type="entry name" value="L27"/>
    <property type="match status" value="1"/>
</dbReference>
<dbReference type="PANTHER" id="PTHR15893:SF0">
    <property type="entry name" value="LARGE RIBOSOMAL SUBUNIT PROTEIN BL27M"/>
    <property type="match status" value="1"/>
</dbReference>
<dbReference type="PANTHER" id="PTHR15893">
    <property type="entry name" value="RIBOSOMAL PROTEIN L27"/>
    <property type="match status" value="1"/>
</dbReference>
<dbReference type="Pfam" id="PF01016">
    <property type="entry name" value="Ribosomal_L27"/>
    <property type="match status" value="1"/>
</dbReference>
<dbReference type="Pfam" id="PF18471">
    <property type="entry name" value="Ribosomal_L27_C"/>
    <property type="match status" value="1"/>
</dbReference>
<dbReference type="PRINTS" id="PR00063">
    <property type="entry name" value="RIBOSOMALL27"/>
</dbReference>
<dbReference type="SUPFAM" id="SSF110324">
    <property type="entry name" value="Ribosomal L27 protein-like"/>
    <property type="match status" value="1"/>
</dbReference>
<dbReference type="PROSITE" id="PS00831">
    <property type="entry name" value="RIBOSOMAL_L27"/>
    <property type="match status" value="1"/>
</dbReference>
<accession>Q6FS31</accession>
<organism>
    <name type="scientific">Candida glabrata (strain ATCC 2001 / BCRC 20586 / JCM 3761 / NBRC 0622 / NRRL Y-65 / CBS 138)</name>
    <name type="common">Yeast</name>
    <name type="synonym">Nakaseomyces glabratus</name>
    <dbReference type="NCBI Taxonomy" id="284593"/>
    <lineage>
        <taxon>Eukaryota</taxon>
        <taxon>Fungi</taxon>
        <taxon>Dikarya</taxon>
        <taxon>Ascomycota</taxon>
        <taxon>Saccharomycotina</taxon>
        <taxon>Saccharomycetes</taxon>
        <taxon>Saccharomycetales</taxon>
        <taxon>Saccharomycetaceae</taxon>
        <taxon>Nakaseomyces</taxon>
    </lineage>
</organism>
<gene>
    <name type="primary">MRPL2</name>
    <name type="ordered locus">CAGL0H03883g</name>
</gene>
<reference key="1">
    <citation type="journal article" date="2004" name="Nature">
        <title>Genome evolution in yeasts.</title>
        <authorList>
            <person name="Dujon B."/>
            <person name="Sherman D."/>
            <person name="Fischer G."/>
            <person name="Durrens P."/>
            <person name="Casaregola S."/>
            <person name="Lafontaine I."/>
            <person name="de Montigny J."/>
            <person name="Marck C."/>
            <person name="Neuveglise C."/>
            <person name="Talla E."/>
            <person name="Goffard N."/>
            <person name="Frangeul L."/>
            <person name="Aigle M."/>
            <person name="Anthouard V."/>
            <person name="Babour A."/>
            <person name="Barbe V."/>
            <person name="Barnay S."/>
            <person name="Blanchin S."/>
            <person name="Beckerich J.-M."/>
            <person name="Beyne E."/>
            <person name="Bleykasten C."/>
            <person name="Boisrame A."/>
            <person name="Boyer J."/>
            <person name="Cattolico L."/>
            <person name="Confanioleri F."/>
            <person name="de Daruvar A."/>
            <person name="Despons L."/>
            <person name="Fabre E."/>
            <person name="Fairhead C."/>
            <person name="Ferry-Dumazet H."/>
            <person name="Groppi A."/>
            <person name="Hantraye F."/>
            <person name="Hennequin C."/>
            <person name="Jauniaux N."/>
            <person name="Joyet P."/>
            <person name="Kachouri R."/>
            <person name="Kerrest A."/>
            <person name="Koszul R."/>
            <person name="Lemaire M."/>
            <person name="Lesur I."/>
            <person name="Ma L."/>
            <person name="Muller H."/>
            <person name="Nicaud J.-M."/>
            <person name="Nikolski M."/>
            <person name="Oztas S."/>
            <person name="Ozier-Kalogeropoulos O."/>
            <person name="Pellenz S."/>
            <person name="Potier S."/>
            <person name="Richard G.-F."/>
            <person name="Straub M.-L."/>
            <person name="Suleau A."/>
            <person name="Swennen D."/>
            <person name="Tekaia F."/>
            <person name="Wesolowski-Louvel M."/>
            <person name="Westhof E."/>
            <person name="Wirth B."/>
            <person name="Zeniou-Meyer M."/>
            <person name="Zivanovic Y."/>
            <person name="Bolotin-Fukuhara M."/>
            <person name="Thierry A."/>
            <person name="Bouchier C."/>
            <person name="Caudron B."/>
            <person name="Scarpelli C."/>
            <person name="Gaillardin C."/>
            <person name="Weissenbach J."/>
            <person name="Wincker P."/>
            <person name="Souciet J.-L."/>
        </authorList>
    </citation>
    <scope>NUCLEOTIDE SEQUENCE [LARGE SCALE GENOMIC DNA]</scope>
    <source>
        <strain>ATCC 2001 / BCRC 20586 / JCM 3761 / NBRC 0622 / NRRL Y-65 / CBS 138</strain>
    </source>
</reference>
<protein>
    <recommendedName>
        <fullName evidence="3">Large ribosomal subunit protein bL27m</fullName>
    </recommendedName>
    <alternativeName>
        <fullName>54S ribosomal protein L2, mitochondrial</fullName>
    </alternativeName>
</protein>
<comment type="function">
    <text evidence="1">Component of the large subunit of mitochondrial ribosome.</text>
</comment>
<comment type="subcellular location">
    <subcellularLocation>
        <location evidence="1">Mitochondrion</location>
    </subcellularLocation>
</comment>
<comment type="similarity">
    <text evidence="3">Belongs to the bacterial ribosomal protein bL27 family.</text>
</comment>
<feature type="transit peptide" description="Mitochondrion" evidence="1">
    <location>
        <begin position="1"/>
        <end position="20"/>
    </location>
</feature>
<feature type="chain" id="PRO_0000030498" description="Large ribosomal subunit protein bL27m">
    <location>
        <begin position="21"/>
        <end position="368"/>
    </location>
</feature>
<feature type="region of interest" description="Disordered" evidence="2">
    <location>
        <begin position="23"/>
        <end position="44"/>
    </location>
</feature>
<feature type="compositionally biased region" description="Basic and acidic residues" evidence="2">
    <location>
        <begin position="31"/>
        <end position="44"/>
    </location>
</feature>
<keyword id="KW-0496">Mitochondrion</keyword>
<keyword id="KW-1185">Reference proteome</keyword>
<keyword id="KW-0687">Ribonucleoprotein</keyword>
<keyword id="KW-0689">Ribosomal protein</keyword>
<keyword id="KW-0809">Transit peptide</keyword>
<proteinExistence type="inferred from homology"/>
<evidence type="ECO:0000250" key="1"/>
<evidence type="ECO:0000256" key="2">
    <source>
        <dbReference type="SAM" id="MobiDB-lite"/>
    </source>
</evidence>
<evidence type="ECO:0000305" key="3"/>
<sequence length="368" mass="43147">MFSGLHTSKYACQVVVQIRTATKRAAGSRTSMKDSAGRRLGPKKYEGQDVKPGEIIMRQRGTKFYPGENVKIGRDHTIYAVEPGVVRYYLDPFHPYRKFIGVALSRDMKLPKPHFEPNVRRFGRIELDNPKAIAKEENALSRKEYLSRDTLLKDLTEREAKRHEMMDNYWNFISSELKLNIIPERKEMASNYLLRYRTGLKNGFDLQEAQFNAKYYLQQMLKLKAKRKEWNEEKLSEQLHNLDETTALLNKSVSFSNKWVIIPYISEEEKLTRKDELIKKLTELGTAIKSKSDKKAVLELFKDASHFLTQAQEVRLRRQFMKPVQPEIMNVNVAEKADKKTTVIRRFNYEKSKIDIIPRTKTAFFKRL</sequence>